<organism>
    <name type="scientific">Helicobacter hepaticus (strain ATCC 51449 / 3B1)</name>
    <dbReference type="NCBI Taxonomy" id="235279"/>
    <lineage>
        <taxon>Bacteria</taxon>
        <taxon>Pseudomonadati</taxon>
        <taxon>Campylobacterota</taxon>
        <taxon>Epsilonproteobacteria</taxon>
        <taxon>Campylobacterales</taxon>
        <taxon>Helicobacteraceae</taxon>
        <taxon>Helicobacter</taxon>
    </lineage>
</organism>
<gene>
    <name evidence="1" type="primary">murA</name>
    <name type="ordered locus">HH_0576</name>
</gene>
<sequence length="421" mass="45295">MDYLQITKSPTLQGSVSISGAKNSALPILAATLLSQNEVTINNLPDVADVKTLAKLLEHLGVNITWHKPTSLTCLAENIVHTRAIYDIVRKMRASILVLGPLLSRFGYCEVSLPGGCAIGARPVDLHIKAMEKMGADIQIKGGYIIAQAKGGLKGADILFDKITVTGSENVIMAAALAQGKTHIINAAKEPEVVQLCEILSQSGVKIEGIGGNELIIYGTGGELLNFAPICVIPDRIEAGTYLCAGAITNSSITLENVENNHLSAITDKLEEIGFGFNKSEHSLTLLPAQSLKPFEIITTEYPGFPTDMQAQFMALATQCEGTSVIEERLFENRFMHVSELQRLGADISLKGNHATIKGISPLLGADVMATDLRASSALVVASLVSEGTTNIHRIYHLDRGYERLEHKLQHLGVNIVRLKS</sequence>
<accession>Q7VIM8</accession>
<keyword id="KW-0131">Cell cycle</keyword>
<keyword id="KW-0132">Cell division</keyword>
<keyword id="KW-0133">Cell shape</keyword>
<keyword id="KW-0961">Cell wall biogenesis/degradation</keyword>
<keyword id="KW-0963">Cytoplasm</keyword>
<keyword id="KW-0573">Peptidoglycan synthesis</keyword>
<keyword id="KW-0670">Pyruvate</keyword>
<keyword id="KW-1185">Reference proteome</keyword>
<keyword id="KW-0808">Transferase</keyword>
<protein>
    <recommendedName>
        <fullName evidence="1">UDP-N-acetylglucosamine 1-carboxyvinyltransferase</fullName>
        <ecNumber evidence="1">2.5.1.7</ecNumber>
    </recommendedName>
    <alternativeName>
        <fullName evidence="1">Enoylpyruvate transferase</fullName>
    </alternativeName>
    <alternativeName>
        <fullName evidence="1">UDP-N-acetylglucosamine enolpyruvyl transferase</fullName>
        <shortName evidence="1">EPT</shortName>
    </alternativeName>
</protein>
<comment type="function">
    <text evidence="1">Cell wall formation. Adds enolpyruvyl to UDP-N-acetylglucosamine.</text>
</comment>
<comment type="catalytic activity">
    <reaction evidence="1">
        <text>phosphoenolpyruvate + UDP-N-acetyl-alpha-D-glucosamine = UDP-N-acetyl-3-O-(1-carboxyvinyl)-alpha-D-glucosamine + phosphate</text>
        <dbReference type="Rhea" id="RHEA:18681"/>
        <dbReference type="ChEBI" id="CHEBI:43474"/>
        <dbReference type="ChEBI" id="CHEBI:57705"/>
        <dbReference type="ChEBI" id="CHEBI:58702"/>
        <dbReference type="ChEBI" id="CHEBI:68483"/>
        <dbReference type="EC" id="2.5.1.7"/>
    </reaction>
</comment>
<comment type="pathway">
    <text evidence="1">Cell wall biogenesis; peptidoglycan biosynthesis.</text>
</comment>
<comment type="subcellular location">
    <subcellularLocation>
        <location evidence="1">Cytoplasm</location>
    </subcellularLocation>
</comment>
<comment type="similarity">
    <text evidence="1">Belongs to the EPSP synthase family. MurA subfamily.</text>
</comment>
<evidence type="ECO:0000255" key="1">
    <source>
        <dbReference type="HAMAP-Rule" id="MF_00111"/>
    </source>
</evidence>
<proteinExistence type="inferred from homology"/>
<dbReference type="EC" id="2.5.1.7" evidence="1"/>
<dbReference type="EMBL" id="AE017125">
    <property type="protein sequence ID" value="AAP77173.1"/>
    <property type="molecule type" value="Genomic_DNA"/>
</dbReference>
<dbReference type="RefSeq" id="WP_011115418.1">
    <property type="nucleotide sequence ID" value="NC_004917.1"/>
</dbReference>
<dbReference type="SMR" id="Q7VIM8"/>
<dbReference type="STRING" id="235279.HH_0576"/>
<dbReference type="KEGG" id="hhe:HH_0576"/>
<dbReference type="eggNOG" id="COG0766">
    <property type="taxonomic scope" value="Bacteria"/>
</dbReference>
<dbReference type="HOGENOM" id="CLU_027387_0_0_7"/>
<dbReference type="OrthoDB" id="9803760at2"/>
<dbReference type="UniPathway" id="UPA00219"/>
<dbReference type="Proteomes" id="UP000002495">
    <property type="component" value="Chromosome"/>
</dbReference>
<dbReference type="GO" id="GO:0005737">
    <property type="term" value="C:cytoplasm"/>
    <property type="evidence" value="ECO:0007669"/>
    <property type="project" value="UniProtKB-SubCell"/>
</dbReference>
<dbReference type="GO" id="GO:0008760">
    <property type="term" value="F:UDP-N-acetylglucosamine 1-carboxyvinyltransferase activity"/>
    <property type="evidence" value="ECO:0007669"/>
    <property type="project" value="UniProtKB-UniRule"/>
</dbReference>
<dbReference type="GO" id="GO:0051301">
    <property type="term" value="P:cell division"/>
    <property type="evidence" value="ECO:0007669"/>
    <property type="project" value="UniProtKB-KW"/>
</dbReference>
<dbReference type="GO" id="GO:0071555">
    <property type="term" value="P:cell wall organization"/>
    <property type="evidence" value="ECO:0007669"/>
    <property type="project" value="UniProtKB-KW"/>
</dbReference>
<dbReference type="GO" id="GO:0009252">
    <property type="term" value="P:peptidoglycan biosynthetic process"/>
    <property type="evidence" value="ECO:0007669"/>
    <property type="project" value="UniProtKB-UniRule"/>
</dbReference>
<dbReference type="GO" id="GO:0008360">
    <property type="term" value="P:regulation of cell shape"/>
    <property type="evidence" value="ECO:0007669"/>
    <property type="project" value="UniProtKB-KW"/>
</dbReference>
<dbReference type="GO" id="GO:0019277">
    <property type="term" value="P:UDP-N-acetylgalactosamine biosynthetic process"/>
    <property type="evidence" value="ECO:0007669"/>
    <property type="project" value="InterPro"/>
</dbReference>
<dbReference type="CDD" id="cd01555">
    <property type="entry name" value="UdpNAET"/>
    <property type="match status" value="1"/>
</dbReference>
<dbReference type="FunFam" id="3.65.10.10:FF:000001">
    <property type="entry name" value="UDP-N-acetylglucosamine 1-carboxyvinyltransferase"/>
    <property type="match status" value="1"/>
</dbReference>
<dbReference type="Gene3D" id="3.65.10.10">
    <property type="entry name" value="Enolpyruvate transferase domain"/>
    <property type="match status" value="2"/>
</dbReference>
<dbReference type="HAMAP" id="MF_00111">
    <property type="entry name" value="MurA"/>
    <property type="match status" value="1"/>
</dbReference>
<dbReference type="InterPro" id="IPR001986">
    <property type="entry name" value="Enolpyruvate_Tfrase_dom"/>
</dbReference>
<dbReference type="InterPro" id="IPR036968">
    <property type="entry name" value="Enolpyruvate_Tfrase_sf"/>
</dbReference>
<dbReference type="InterPro" id="IPR050068">
    <property type="entry name" value="MurA_subfamily"/>
</dbReference>
<dbReference type="InterPro" id="IPR013792">
    <property type="entry name" value="RNA3'P_cycl/enolpyr_Trfase_a/b"/>
</dbReference>
<dbReference type="InterPro" id="IPR005750">
    <property type="entry name" value="UDP_GlcNAc_COvinyl_MurA"/>
</dbReference>
<dbReference type="NCBIfam" id="TIGR01072">
    <property type="entry name" value="murA"/>
    <property type="match status" value="1"/>
</dbReference>
<dbReference type="NCBIfam" id="NF006873">
    <property type="entry name" value="PRK09369.1"/>
    <property type="match status" value="1"/>
</dbReference>
<dbReference type="PANTHER" id="PTHR43783">
    <property type="entry name" value="UDP-N-ACETYLGLUCOSAMINE 1-CARBOXYVINYLTRANSFERASE"/>
    <property type="match status" value="1"/>
</dbReference>
<dbReference type="PANTHER" id="PTHR43783:SF1">
    <property type="entry name" value="UDP-N-ACETYLGLUCOSAMINE 1-CARBOXYVINYLTRANSFERASE"/>
    <property type="match status" value="1"/>
</dbReference>
<dbReference type="Pfam" id="PF00275">
    <property type="entry name" value="EPSP_synthase"/>
    <property type="match status" value="1"/>
</dbReference>
<dbReference type="SUPFAM" id="SSF55205">
    <property type="entry name" value="EPT/RTPC-like"/>
    <property type="match status" value="1"/>
</dbReference>
<feature type="chain" id="PRO_0000231212" description="UDP-N-acetylglucosamine 1-carboxyvinyltransferase">
    <location>
        <begin position="1"/>
        <end position="421"/>
    </location>
</feature>
<feature type="active site" description="Proton donor" evidence="1">
    <location>
        <position position="117"/>
    </location>
</feature>
<feature type="binding site" evidence="1">
    <location>
        <begin position="22"/>
        <end position="23"/>
    </location>
    <ligand>
        <name>phosphoenolpyruvate</name>
        <dbReference type="ChEBI" id="CHEBI:58702"/>
    </ligand>
</feature>
<feature type="binding site" evidence="1">
    <location>
        <position position="93"/>
    </location>
    <ligand>
        <name>UDP-N-acetyl-alpha-D-glucosamine</name>
        <dbReference type="ChEBI" id="CHEBI:57705"/>
    </ligand>
</feature>
<feature type="binding site" evidence="1">
    <location>
        <begin position="122"/>
        <end position="126"/>
    </location>
    <ligand>
        <name>UDP-N-acetyl-alpha-D-glucosamine</name>
        <dbReference type="ChEBI" id="CHEBI:57705"/>
    </ligand>
</feature>
<feature type="binding site" evidence="1">
    <location>
        <position position="308"/>
    </location>
    <ligand>
        <name>UDP-N-acetyl-alpha-D-glucosamine</name>
        <dbReference type="ChEBI" id="CHEBI:57705"/>
    </ligand>
</feature>
<feature type="binding site" evidence="1">
    <location>
        <position position="330"/>
    </location>
    <ligand>
        <name>UDP-N-acetyl-alpha-D-glucosamine</name>
        <dbReference type="ChEBI" id="CHEBI:57705"/>
    </ligand>
</feature>
<feature type="modified residue" description="2-(S-cysteinyl)pyruvic acid O-phosphothioketal" evidence="1">
    <location>
        <position position="117"/>
    </location>
</feature>
<reference key="1">
    <citation type="journal article" date="2003" name="Proc. Natl. Acad. Sci. U.S.A.">
        <title>The complete genome sequence of the carcinogenic bacterium Helicobacter hepaticus.</title>
        <authorList>
            <person name="Suerbaum S."/>
            <person name="Josenhans C."/>
            <person name="Sterzenbach T."/>
            <person name="Drescher B."/>
            <person name="Brandt P."/>
            <person name="Bell M."/>
            <person name="Droege M."/>
            <person name="Fartmann B."/>
            <person name="Fischer H.-P."/>
            <person name="Ge Z."/>
            <person name="Hoerster A."/>
            <person name="Holland R."/>
            <person name="Klein K."/>
            <person name="Koenig J."/>
            <person name="Macko L."/>
            <person name="Mendz G.L."/>
            <person name="Nyakatura G."/>
            <person name="Schauer D.B."/>
            <person name="Shen Z."/>
            <person name="Weber J."/>
            <person name="Frosch M."/>
            <person name="Fox J.G."/>
        </authorList>
    </citation>
    <scope>NUCLEOTIDE SEQUENCE [LARGE SCALE GENOMIC DNA]</scope>
    <source>
        <strain>ATCC 51449 / 3B1</strain>
    </source>
</reference>
<name>MURA_HELHP</name>